<name>LIPA_SORMK</name>
<accession>D1Z4I6</accession>
<accession>F7VQA7</accession>
<organism>
    <name type="scientific">Sordaria macrospora (strain ATCC MYA-333 / DSM 997 / K(L3346) / K-hell)</name>
    <dbReference type="NCBI Taxonomy" id="771870"/>
    <lineage>
        <taxon>Eukaryota</taxon>
        <taxon>Fungi</taxon>
        <taxon>Dikarya</taxon>
        <taxon>Ascomycota</taxon>
        <taxon>Pezizomycotina</taxon>
        <taxon>Sordariomycetes</taxon>
        <taxon>Sordariomycetidae</taxon>
        <taxon>Sordariales</taxon>
        <taxon>Sordariaceae</taxon>
        <taxon>Sordaria</taxon>
    </lineage>
</organism>
<protein>
    <recommendedName>
        <fullName evidence="1">Lipoyl synthase, mitochondrial</fullName>
        <ecNumber evidence="1">2.8.1.8</ecNumber>
    </recommendedName>
    <alternativeName>
        <fullName evidence="1">Lipoate synthase</fullName>
        <shortName evidence="1">LS</shortName>
        <shortName evidence="1">Lip-syn</shortName>
    </alternativeName>
    <alternativeName>
        <fullName evidence="1">Lipoic acid synthase</fullName>
    </alternativeName>
</protein>
<reference key="1">
    <citation type="journal article" date="2010" name="PLoS Genet.">
        <title>De novo assembly of a 40 Mb eukaryotic genome from short sequence reads: Sordaria macrospora, a model organism for fungal morphogenesis.</title>
        <authorList>
            <person name="Nowrousian M."/>
            <person name="Stajich J.E."/>
            <person name="Chu M."/>
            <person name="Engh I."/>
            <person name="Espagne E."/>
            <person name="Halliday K."/>
            <person name="Kamerewerd J."/>
            <person name="Kempken F."/>
            <person name="Knab B."/>
            <person name="Kuo H.-C."/>
            <person name="Osiewacz H.D."/>
            <person name="Poeggeler S."/>
            <person name="Read N.D."/>
            <person name="Seiler S."/>
            <person name="Smith K.M."/>
            <person name="Zickler D."/>
            <person name="Kueck U."/>
            <person name="Freitag M."/>
        </authorList>
    </citation>
    <scope>NUCLEOTIDE SEQUENCE [LARGE SCALE GENOMIC DNA]</scope>
    <source>
        <strain>ATCC MYA-333 / DSM 997 / K(L3346) / K-hell</strain>
    </source>
</reference>
<proteinExistence type="inferred from homology"/>
<feature type="transit peptide" description="Mitochondrion" evidence="1">
    <location>
        <begin position="1"/>
        <end position="40"/>
    </location>
</feature>
<feature type="chain" id="PRO_0000398293" description="Lipoyl synthase, mitochondrial">
    <location>
        <begin position="41"/>
        <end position="445"/>
    </location>
</feature>
<feature type="domain" description="Radical SAM core" evidence="2">
    <location>
        <begin position="171"/>
        <end position="394"/>
    </location>
</feature>
<feature type="region of interest" description="Disordered" evidence="3">
    <location>
        <begin position="42"/>
        <end position="77"/>
    </location>
</feature>
<feature type="compositionally biased region" description="Low complexity" evidence="3">
    <location>
        <begin position="42"/>
        <end position="71"/>
    </location>
</feature>
<feature type="binding site" evidence="1">
    <location>
        <position position="157"/>
    </location>
    <ligand>
        <name>[4Fe-4S] cluster</name>
        <dbReference type="ChEBI" id="CHEBI:49883"/>
        <label>1</label>
    </ligand>
</feature>
<feature type="binding site" evidence="1">
    <location>
        <position position="162"/>
    </location>
    <ligand>
        <name>[4Fe-4S] cluster</name>
        <dbReference type="ChEBI" id="CHEBI:49883"/>
        <label>1</label>
    </ligand>
</feature>
<feature type="binding site" evidence="1">
    <location>
        <position position="168"/>
    </location>
    <ligand>
        <name>[4Fe-4S] cluster</name>
        <dbReference type="ChEBI" id="CHEBI:49883"/>
        <label>1</label>
    </ligand>
</feature>
<feature type="binding site" evidence="1">
    <location>
        <position position="188"/>
    </location>
    <ligand>
        <name>[4Fe-4S] cluster</name>
        <dbReference type="ChEBI" id="CHEBI:49883"/>
        <label>2</label>
        <note>4Fe-4S-S-AdoMet</note>
    </ligand>
</feature>
<feature type="binding site" evidence="1">
    <location>
        <position position="192"/>
    </location>
    <ligand>
        <name>[4Fe-4S] cluster</name>
        <dbReference type="ChEBI" id="CHEBI:49883"/>
        <label>2</label>
        <note>4Fe-4S-S-AdoMet</note>
    </ligand>
</feature>
<feature type="binding site" evidence="1">
    <location>
        <position position="195"/>
    </location>
    <ligand>
        <name>[4Fe-4S] cluster</name>
        <dbReference type="ChEBI" id="CHEBI:49883"/>
        <label>2</label>
        <note>4Fe-4S-S-AdoMet</note>
    </ligand>
</feature>
<feature type="binding site" evidence="1">
    <location>
        <position position="405"/>
    </location>
    <ligand>
        <name>[4Fe-4S] cluster</name>
        <dbReference type="ChEBI" id="CHEBI:49883"/>
        <label>1</label>
    </ligand>
</feature>
<sequence>MRPGSWRVITHYGFTGPIQRLQAPLRRSLARAAALSTRSYATIPSAPSSQPTSQESSPAASASASASAPATKPRPTYFKDTTLASLDDFIANQSSAAPLAPSEAYTLRTAQVGPAGKKRTITRLPEWLKTPIPSAGANPEFAKIKADLRGLNLHTVCEEARCPNIGECWGGSNKAAATATIMLMGDTCTRGCRFCSVKTSRKPPPLDPHEPENTAEALARWGLGYVVLTSVDRDDLADGGARHFAETIRRIKQKKPTLLVEALTGDFMGDLDMVKIVADSGLDVYAHNVETVENLTPYVRDRRATFRQSLKVLEHVKNVRGKEGIITKTSIMLGLGETEEELWDALRELRKVDVDVVTFGQYMRPTKRHLAVEKYITPDEFELWRQRALDMGFLYCASGPLVRSSYKAGEAFIENVLKKRASERVVSEALGQAVAAEEATSAKSA</sequence>
<comment type="function">
    <text evidence="1">Catalyzes the radical-mediated insertion of two sulfur atoms into the C-6 and C-8 positions of the octanoyl moiety bound to the lipoyl domains of lipoate-dependent enzymes, thereby converting the octanoylated domains into lipoylated derivatives.</text>
</comment>
<comment type="catalytic activity">
    <reaction evidence="1">
        <text>[[Fe-S] cluster scaffold protein carrying a second [4Fe-4S](2+) cluster] + N(6)-octanoyl-L-lysyl-[protein] + 2 oxidized [2Fe-2S]-[ferredoxin] + 2 S-adenosyl-L-methionine + 4 H(+) = [[Fe-S] cluster scaffold protein] + N(6)-[(R)-dihydrolipoyl]-L-lysyl-[protein] + 4 Fe(3+) + 2 hydrogen sulfide + 2 5'-deoxyadenosine + 2 L-methionine + 2 reduced [2Fe-2S]-[ferredoxin]</text>
        <dbReference type="Rhea" id="RHEA:16585"/>
        <dbReference type="Rhea" id="RHEA-COMP:9928"/>
        <dbReference type="Rhea" id="RHEA-COMP:10000"/>
        <dbReference type="Rhea" id="RHEA-COMP:10001"/>
        <dbReference type="Rhea" id="RHEA-COMP:10475"/>
        <dbReference type="Rhea" id="RHEA-COMP:14568"/>
        <dbReference type="Rhea" id="RHEA-COMP:14569"/>
        <dbReference type="ChEBI" id="CHEBI:15378"/>
        <dbReference type="ChEBI" id="CHEBI:17319"/>
        <dbReference type="ChEBI" id="CHEBI:29034"/>
        <dbReference type="ChEBI" id="CHEBI:29919"/>
        <dbReference type="ChEBI" id="CHEBI:33722"/>
        <dbReference type="ChEBI" id="CHEBI:33737"/>
        <dbReference type="ChEBI" id="CHEBI:33738"/>
        <dbReference type="ChEBI" id="CHEBI:57844"/>
        <dbReference type="ChEBI" id="CHEBI:59789"/>
        <dbReference type="ChEBI" id="CHEBI:78809"/>
        <dbReference type="ChEBI" id="CHEBI:83100"/>
        <dbReference type="EC" id="2.8.1.8"/>
    </reaction>
</comment>
<comment type="cofactor">
    <cofactor evidence="1">
        <name>[4Fe-4S] cluster</name>
        <dbReference type="ChEBI" id="CHEBI:49883"/>
    </cofactor>
    <text evidence="1">Binds 2 [4Fe-4S] clusters per subunit. One cluster is coordinated with 3 cysteines and an exchangeable S-adenosyl-L-methionine.</text>
</comment>
<comment type="pathway">
    <text evidence="1">Protein modification; protein lipoylation via endogenous pathway; protein N(6)-(lipoyl)lysine from octanoyl-[acyl-carrier-protein]: step 2/2.</text>
</comment>
<comment type="subcellular location">
    <subcellularLocation>
        <location evidence="1">Mitochondrion</location>
    </subcellularLocation>
</comment>
<comment type="similarity">
    <text evidence="1">Belongs to the radical SAM superfamily. Lipoyl synthase family.</text>
</comment>
<evidence type="ECO:0000255" key="1">
    <source>
        <dbReference type="HAMAP-Rule" id="MF_03123"/>
    </source>
</evidence>
<evidence type="ECO:0000255" key="2">
    <source>
        <dbReference type="PROSITE-ProRule" id="PRU01266"/>
    </source>
</evidence>
<evidence type="ECO:0000256" key="3">
    <source>
        <dbReference type="SAM" id="MobiDB-lite"/>
    </source>
</evidence>
<keyword id="KW-0004">4Fe-4S</keyword>
<keyword id="KW-0408">Iron</keyword>
<keyword id="KW-0411">Iron-sulfur</keyword>
<keyword id="KW-0479">Metal-binding</keyword>
<keyword id="KW-0496">Mitochondrion</keyword>
<keyword id="KW-1185">Reference proteome</keyword>
<keyword id="KW-0949">S-adenosyl-L-methionine</keyword>
<keyword id="KW-0808">Transferase</keyword>
<keyword id="KW-0809">Transit peptide</keyword>
<dbReference type="EC" id="2.8.1.8" evidence="1"/>
<dbReference type="EMBL" id="CABT02000004">
    <property type="protein sequence ID" value="CCC07689.1"/>
    <property type="molecule type" value="Genomic_DNA"/>
</dbReference>
<dbReference type="RefSeq" id="XP_003352422.1">
    <property type="nucleotide sequence ID" value="XM_003352374.1"/>
</dbReference>
<dbReference type="SMR" id="D1Z4I6"/>
<dbReference type="FunCoup" id="D1Z4I6">
    <property type="interactions" value="565"/>
</dbReference>
<dbReference type="STRING" id="771870.D1Z4I6"/>
<dbReference type="GeneID" id="10810058"/>
<dbReference type="KEGG" id="smp:10810058"/>
<dbReference type="VEuPathDB" id="FungiDB:SMAC_01256"/>
<dbReference type="eggNOG" id="KOG2672">
    <property type="taxonomic scope" value="Eukaryota"/>
</dbReference>
<dbReference type="HOGENOM" id="CLU_033144_0_1_1"/>
<dbReference type="InParanoid" id="D1Z4I6"/>
<dbReference type="OMA" id="PYCDIDF"/>
<dbReference type="OrthoDB" id="3231at2759"/>
<dbReference type="UniPathway" id="UPA00538">
    <property type="reaction ID" value="UER00593"/>
</dbReference>
<dbReference type="Proteomes" id="UP000001881">
    <property type="component" value="Unassembled WGS sequence"/>
</dbReference>
<dbReference type="GO" id="GO:0005739">
    <property type="term" value="C:mitochondrion"/>
    <property type="evidence" value="ECO:0007669"/>
    <property type="project" value="UniProtKB-SubCell"/>
</dbReference>
<dbReference type="GO" id="GO:0051539">
    <property type="term" value="F:4 iron, 4 sulfur cluster binding"/>
    <property type="evidence" value="ECO:0007669"/>
    <property type="project" value="UniProtKB-UniRule"/>
</dbReference>
<dbReference type="GO" id="GO:0016992">
    <property type="term" value="F:lipoate synthase activity"/>
    <property type="evidence" value="ECO:0007669"/>
    <property type="project" value="UniProtKB-UniRule"/>
</dbReference>
<dbReference type="GO" id="GO:0046872">
    <property type="term" value="F:metal ion binding"/>
    <property type="evidence" value="ECO:0007669"/>
    <property type="project" value="UniProtKB-KW"/>
</dbReference>
<dbReference type="CDD" id="cd01335">
    <property type="entry name" value="Radical_SAM"/>
    <property type="match status" value="1"/>
</dbReference>
<dbReference type="FunFam" id="3.20.20.70:FF:000036">
    <property type="entry name" value="Lipoyl synthase, mitochondrial"/>
    <property type="match status" value="1"/>
</dbReference>
<dbReference type="Gene3D" id="3.20.20.70">
    <property type="entry name" value="Aldolase class I"/>
    <property type="match status" value="1"/>
</dbReference>
<dbReference type="HAMAP" id="MF_00206">
    <property type="entry name" value="Lipoyl_synth"/>
    <property type="match status" value="1"/>
</dbReference>
<dbReference type="InterPro" id="IPR013785">
    <property type="entry name" value="Aldolase_TIM"/>
</dbReference>
<dbReference type="InterPro" id="IPR006638">
    <property type="entry name" value="Elp3/MiaA/NifB-like_rSAM"/>
</dbReference>
<dbReference type="InterPro" id="IPR031691">
    <property type="entry name" value="LIAS_N"/>
</dbReference>
<dbReference type="InterPro" id="IPR003698">
    <property type="entry name" value="Lipoyl_synth"/>
</dbReference>
<dbReference type="InterPro" id="IPR007197">
    <property type="entry name" value="rSAM"/>
</dbReference>
<dbReference type="NCBIfam" id="TIGR00510">
    <property type="entry name" value="lipA"/>
    <property type="match status" value="1"/>
</dbReference>
<dbReference type="NCBIfam" id="NF004019">
    <property type="entry name" value="PRK05481.1"/>
    <property type="match status" value="1"/>
</dbReference>
<dbReference type="NCBIfam" id="NF009544">
    <property type="entry name" value="PRK12928.1"/>
    <property type="match status" value="1"/>
</dbReference>
<dbReference type="PANTHER" id="PTHR10949">
    <property type="entry name" value="LIPOYL SYNTHASE"/>
    <property type="match status" value="1"/>
</dbReference>
<dbReference type="PANTHER" id="PTHR10949:SF0">
    <property type="entry name" value="LIPOYL SYNTHASE, MITOCHONDRIAL"/>
    <property type="match status" value="1"/>
</dbReference>
<dbReference type="Pfam" id="PF16881">
    <property type="entry name" value="LIAS_N"/>
    <property type="match status" value="1"/>
</dbReference>
<dbReference type="Pfam" id="PF04055">
    <property type="entry name" value="Radical_SAM"/>
    <property type="match status" value="1"/>
</dbReference>
<dbReference type="SFLD" id="SFLDF00271">
    <property type="entry name" value="lipoyl_synthase"/>
    <property type="match status" value="1"/>
</dbReference>
<dbReference type="SFLD" id="SFLDS00029">
    <property type="entry name" value="Radical_SAM"/>
    <property type="match status" value="1"/>
</dbReference>
<dbReference type="SMART" id="SM00729">
    <property type="entry name" value="Elp3"/>
    <property type="match status" value="1"/>
</dbReference>
<dbReference type="SUPFAM" id="SSF102114">
    <property type="entry name" value="Radical SAM enzymes"/>
    <property type="match status" value="1"/>
</dbReference>
<dbReference type="PROSITE" id="PS51918">
    <property type="entry name" value="RADICAL_SAM"/>
    <property type="match status" value="1"/>
</dbReference>
<gene>
    <name type="ORF">SMAC_01256</name>
</gene>